<accession>P00088</accession>
<sequence length="97" mass="10222">ADAPAGFTLCKACHSVEAGKNGVGPSLAGVYGRKAGTISGFKFSDPHIKSGLTWDEPTLTKYLADPKTVIPGNKMVFAGLKNPDDVKAVIEYLKTLK</sequence>
<reference key="1">
    <citation type="journal article" date="1979" name="Nature">
        <title>Cytochrome c2 sequence variation among the recognised species of purple nonsulphur photosynthetic bacteria.</title>
        <authorList>
            <person name="Ambler R.P."/>
            <person name="Daniel M."/>
            <person name="Hermoso J."/>
            <person name="Meyer T.E."/>
            <person name="Bartsch R.G."/>
            <person name="Kamen M.D."/>
        </authorList>
    </citation>
    <scope>PROTEIN SEQUENCE</scope>
    <source>
        <strain>ATCC 14031 / DSM 120 / KCTC 15609 / LMG 4354 / NCIMB 9957 / NTHC 131 / S</strain>
    </source>
</reference>
<reference key="2">
    <citation type="submission" date="1977-06" db="PIR data bank">
        <authorList>
            <person name="Ambler R.P."/>
        </authorList>
    </citation>
    <scope>PROTEIN SEQUENCE</scope>
</reference>
<protein>
    <recommendedName>
        <fullName>Cytochrome c2 iso-2</fullName>
    </recommendedName>
</protein>
<dbReference type="PIR" id="A00080">
    <property type="entry name" value="CCQFM2"/>
</dbReference>
<dbReference type="SMR" id="P00088"/>
<dbReference type="GO" id="GO:0009055">
    <property type="term" value="F:electron transfer activity"/>
    <property type="evidence" value="ECO:0007669"/>
    <property type="project" value="InterPro"/>
</dbReference>
<dbReference type="GO" id="GO:0020037">
    <property type="term" value="F:heme binding"/>
    <property type="evidence" value="ECO:0007669"/>
    <property type="project" value="InterPro"/>
</dbReference>
<dbReference type="GO" id="GO:0046872">
    <property type="term" value="F:metal ion binding"/>
    <property type="evidence" value="ECO:0007669"/>
    <property type="project" value="UniProtKB-KW"/>
</dbReference>
<dbReference type="GO" id="GO:0015979">
    <property type="term" value="P:photosynthesis"/>
    <property type="evidence" value="ECO:0007669"/>
    <property type="project" value="UniProtKB-KW"/>
</dbReference>
<dbReference type="Gene3D" id="1.10.760.10">
    <property type="entry name" value="Cytochrome c-like domain"/>
    <property type="match status" value="1"/>
</dbReference>
<dbReference type="InterPro" id="IPR009056">
    <property type="entry name" value="Cyt_c-like_dom"/>
</dbReference>
<dbReference type="InterPro" id="IPR036909">
    <property type="entry name" value="Cyt_c-like_dom_sf"/>
</dbReference>
<dbReference type="InterPro" id="IPR002327">
    <property type="entry name" value="Cyt_c_1A/1B"/>
</dbReference>
<dbReference type="PANTHER" id="PTHR11961">
    <property type="entry name" value="CYTOCHROME C"/>
    <property type="match status" value="1"/>
</dbReference>
<dbReference type="Pfam" id="PF00034">
    <property type="entry name" value="Cytochrom_C"/>
    <property type="match status" value="1"/>
</dbReference>
<dbReference type="PRINTS" id="PR00604">
    <property type="entry name" value="CYTCHRMECIAB"/>
</dbReference>
<dbReference type="SUPFAM" id="SSF46626">
    <property type="entry name" value="Cytochrome c"/>
    <property type="match status" value="1"/>
</dbReference>
<dbReference type="PROSITE" id="PS51007">
    <property type="entry name" value="CYTC"/>
    <property type="match status" value="1"/>
</dbReference>
<organism>
    <name type="scientific">Magnetospirillum molischianum</name>
    <name type="common">Rhodospirillum molischianum</name>
    <dbReference type="NCBI Taxonomy" id="1083"/>
    <lineage>
        <taxon>Bacteria</taxon>
        <taxon>Pseudomonadati</taxon>
        <taxon>Pseudomonadota</taxon>
        <taxon>Alphaproteobacteria</taxon>
        <taxon>Rhodospirillales</taxon>
        <taxon>Rhodospirillaceae</taxon>
        <taxon>Magnetospirillum</taxon>
    </lineage>
</organism>
<keyword id="KW-0903">Direct protein sequencing</keyword>
<keyword id="KW-0249">Electron transport</keyword>
<keyword id="KW-0349">Heme</keyword>
<keyword id="KW-0408">Iron</keyword>
<keyword id="KW-0479">Metal-binding</keyword>
<keyword id="KW-0602">Photosynthesis</keyword>
<keyword id="KW-0813">Transport</keyword>
<name>CYC22_MAGML</name>
<proteinExistence type="evidence at protein level"/>
<feature type="chain" id="PRO_0000108352" description="Cytochrome c2 iso-2">
    <location>
        <begin position="1"/>
        <end position="97"/>
    </location>
</feature>
<feature type="binding site" description="covalent" evidence="2">
    <location>
        <position position="10"/>
    </location>
    <ligand>
        <name>heme c</name>
        <dbReference type="ChEBI" id="CHEBI:61717"/>
    </ligand>
</feature>
<feature type="binding site" description="covalent" evidence="2">
    <location>
        <position position="13"/>
    </location>
    <ligand>
        <name>heme c</name>
        <dbReference type="ChEBI" id="CHEBI:61717"/>
    </ligand>
</feature>
<feature type="binding site" description="axial binding residue" evidence="2">
    <location>
        <position position="14"/>
    </location>
    <ligand>
        <name>heme c</name>
        <dbReference type="ChEBI" id="CHEBI:61717"/>
    </ligand>
    <ligandPart>
        <name>Fe</name>
        <dbReference type="ChEBI" id="CHEBI:18248"/>
    </ligandPart>
</feature>
<feature type="binding site" description="axial binding residue" evidence="2">
    <location>
        <position position="75"/>
    </location>
    <ligand>
        <name>heme c</name>
        <dbReference type="ChEBI" id="CHEBI:61717"/>
    </ligand>
    <ligandPart>
        <name>Fe</name>
        <dbReference type="ChEBI" id="CHEBI:18248"/>
    </ligandPart>
</feature>
<comment type="function">
    <text>Cytochrome c2 is found mainly in purple, non-sulfur, photosynthetic bacteria where it functions as the electron donor to the oxidized bacteriochlorophyll in the photophosphorylation pathway. However, it may also have a role in the respiratory chain and is found in some non-photosynthetic bacteria.</text>
</comment>
<comment type="PTM">
    <text evidence="1">Binds 1 heme c group covalently per subunit.</text>
</comment>
<comment type="similarity">
    <text evidence="3">Belongs to the cytochrome c family.</text>
</comment>
<comment type="caution">
    <text evidence="3">Approximately 30% of the residue corresponding to Tyr-62 is present as Phe, suggesting there may be more than 1 gene for this protein in this organism.</text>
</comment>
<evidence type="ECO:0000250" key="1"/>
<evidence type="ECO:0000255" key="2">
    <source>
        <dbReference type="PROSITE-ProRule" id="PRU00433"/>
    </source>
</evidence>
<evidence type="ECO:0000305" key="3"/>